<gene>
    <name evidence="1" type="primary">orn</name>
    <name type="ordered locus">NMA0594</name>
</gene>
<organism>
    <name type="scientific">Neisseria meningitidis serogroup A / serotype 4A (strain DSM 15465 / Z2491)</name>
    <dbReference type="NCBI Taxonomy" id="122587"/>
    <lineage>
        <taxon>Bacteria</taxon>
        <taxon>Pseudomonadati</taxon>
        <taxon>Pseudomonadota</taxon>
        <taxon>Betaproteobacteria</taxon>
        <taxon>Neisseriales</taxon>
        <taxon>Neisseriaceae</taxon>
        <taxon>Neisseria</taxon>
    </lineage>
</organism>
<dbReference type="EC" id="3.1.15.-" evidence="1"/>
<dbReference type="EMBL" id="AL157959">
    <property type="protein sequence ID" value="CAM07862.1"/>
    <property type="molecule type" value="Genomic_DNA"/>
</dbReference>
<dbReference type="PIR" id="F81978">
    <property type="entry name" value="F81978"/>
</dbReference>
<dbReference type="SMR" id="Q9JW09"/>
<dbReference type="EnsemblBacteria" id="CAM07862">
    <property type="protein sequence ID" value="CAM07862"/>
    <property type="gene ID" value="NMA0594"/>
</dbReference>
<dbReference type="KEGG" id="nma:NMA0594"/>
<dbReference type="HOGENOM" id="CLU_064761_2_0_4"/>
<dbReference type="Proteomes" id="UP000000626">
    <property type="component" value="Chromosome"/>
</dbReference>
<dbReference type="GO" id="GO:0005737">
    <property type="term" value="C:cytoplasm"/>
    <property type="evidence" value="ECO:0007669"/>
    <property type="project" value="UniProtKB-SubCell"/>
</dbReference>
<dbReference type="GO" id="GO:0000175">
    <property type="term" value="F:3'-5'-RNA exonuclease activity"/>
    <property type="evidence" value="ECO:0007669"/>
    <property type="project" value="InterPro"/>
</dbReference>
<dbReference type="GO" id="GO:0003676">
    <property type="term" value="F:nucleic acid binding"/>
    <property type="evidence" value="ECO:0007669"/>
    <property type="project" value="InterPro"/>
</dbReference>
<dbReference type="GO" id="GO:0006259">
    <property type="term" value="P:DNA metabolic process"/>
    <property type="evidence" value="ECO:0007669"/>
    <property type="project" value="UniProtKB-ARBA"/>
</dbReference>
<dbReference type="CDD" id="cd06135">
    <property type="entry name" value="Orn"/>
    <property type="match status" value="1"/>
</dbReference>
<dbReference type="FunFam" id="3.30.420.10:FF:000143">
    <property type="entry name" value="Oligoribonuclease"/>
    <property type="match status" value="1"/>
</dbReference>
<dbReference type="Gene3D" id="3.30.420.10">
    <property type="entry name" value="Ribonuclease H-like superfamily/Ribonuclease H"/>
    <property type="match status" value="1"/>
</dbReference>
<dbReference type="HAMAP" id="MF_00045">
    <property type="entry name" value="Oligoribonuclease"/>
    <property type="match status" value="1"/>
</dbReference>
<dbReference type="InterPro" id="IPR013520">
    <property type="entry name" value="Exonuclease_RNaseT/DNA_pol3"/>
</dbReference>
<dbReference type="InterPro" id="IPR022894">
    <property type="entry name" value="Oligoribonuclease"/>
</dbReference>
<dbReference type="InterPro" id="IPR012337">
    <property type="entry name" value="RNaseH-like_sf"/>
</dbReference>
<dbReference type="InterPro" id="IPR036397">
    <property type="entry name" value="RNaseH_sf"/>
</dbReference>
<dbReference type="NCBIfam" id="NF003765">
    <property type="entry name" value="PRK05359.1"/>
    <property type="match status" value="1"/>
</dbReference>
<dbReference type="PANTHER" id="PTHR11046">
    <property type="entry name" value="OLIGORIBONUCLEASE, MITOCHONDRIAL"/>
    <property type="match status" value="1"/>
</dbReference>
<dbReference type="PANTHER" id="PTHR11046:SF0">
    <property type="entry name" value="OLIGORIBONUCLEASE, MITOCHONDRIAL"/>
    <property type="match status" value="1"/>
</dbReference>
<dbReference type="Pfam" id="PF00929">
    <property type="entry name" value="RNase_T"/>
    <property type="match status" value="1"/>
</dbReference>
<dbReference type="SMART" id="SM00479">
    <property type="entry name" value="EXOIII"/>
    <property type="match status" value="1"/>
</dbReference>
<dbReference type="SUPFAM" id="SSF53098">
    <property type="entry name" value="Ribonuclease H-like"/>
    <property type="match status" value="1"/>
</dbReference>
<sequence>MQDKNNLCWLDMEMTGLNPETDRIIEVAMIITDSDLNVLAQSEVYAIHQSDELLDNMDEWNTATHGRTGLTQRVRESSHTEAEVEQKLLDFMSEWVPRRATPMCGNSIHQDRRFMVKYMPKLENYFHYRNLDVSTLKELAKRWNPPVAKSVVKRGSHKALDDILESIEEMRHYREHFLISAPRAEAQ</sequence>
<name>ORN_NEIMA</name>
<comment type="function">
    <text evidence="1">3'-to-5' exoribonuclease specific for small oligoribonucleotides.</text>
</comment>
<comment type="subcellular location">
    <subcellularLocation>
        <location evidence="1">Cytoplasm</location>
    </subcellularLocation>
</comment>
<comment type="similarity">
    <text evidence="1">Belongs to the oligoribonuclease family.</text>
</comment>
<evidence type="ECO:0000255" key="1">
    <source>
        <dbReference type="HAMAP-Rule" id="MF_00045"/>
    </source>
</evidence>
<feature type="chain" id="PRO_0000111053" description="Oligoribonuclease">
    <location>
        <begin position="1"/>
        <end position="187"/>
    </location>
</feature>
<feature type="domain" description="Exonuclease" evidence="1">
    <location>
        <begin position="7"/>
        <end position="170"/>
    </location>
</feature>
<feature type="active site" evidence="1">
    <location>
        <position position="128"/>
    </location>
</feature>
<keyword id="KW-0963">Cytoplasm</keyword>
<keyword id="KW-0269">Exonuclease</keyword>
<keyword id="KW-0378">Hydrolase</keyword>
<keyword id="KW-0540">Nuclease</keyword>
<reference key="1">
    <citation type="journal article" date="2000" name="Nature">
        <title>Complete DNA sequence of a serogroup A strain of Neisseria meningitidis Z2491.</title>
        <authorList>
            <person name="Parkhill J."/>
            <person name="Achtman M."/>
            <person name="James K.D."/>
            <person name="Bentley S.D."/>
            <person name="Churcher C.M."/>
            <person name="Klee S.R."/>
            <person name="Morelli G."/>
            <person name="Basham D."/>
            <person name="Brown D."/>
            <person name="Chillingworth T."/>
            <person name="Davies R.M."/>
            <person name="Davis P."/>
            <person name="Devlin K."/>
            <person name="Feltwell T."/>
            <person name="Hamlin N."/>
            <person name="Holroyd S."/>
            <person name="Jagels K."/>
            <person name="Leather S."/>
            <person name="Moule S."/>
            <person name="Mungall K.L."/>
            <person name="Quail M.A."/>
            <person name="Rajandream M.A."/>
            <person name="Rutherford K.M."/>
            <person name="Simmonds M."/>
            <person name="Skelton J."/>
            <person name="Whitehead S."/>
            <person name="Spratt B.G."/>
            <person name="Barrell B.G."/>
        </authorList>
    </citation>
    <scope>NUCLEOTIDE SEQUENCE [LARGE SCALE GENOMIC DNA]</scope>
    <source>
        <strain>DSM 15465 / Z2491</strain>
    </source>
</reference>
<proteinExistence type="inferred from homology"/>
<accession>Q9JW09</accession>
<accession>A1IQ36</accession>
<protein>
    <recommendedName>
        <fullName evidence="1">Oligoribonuclease</fullName>
        <ecNumber evidence="1">3.1.15.-</ecNumber>
    </recommendedName>
</protein>